<comment type="function">
    <text evidence="1">Catalyzes the conversion of 4-hydroxy-tetrahydrodipicolinate (HTPA) to tetrahydrodipicolinate.</text>
</comment>
<comment type="catalytic activity">
    <reaction evidence="1">
        <text>(S)-2,3,4,5-tetrahydrodipicolinate + NAD(+) + H2O = (2S,4S)-4-hydroxy-2,3,4,5-tetrahydrodipicolinate + NADH + H(+)</text>
        <dbReference type="Rhea" id="RHEA:35323"/>
        <dbReference type="ChEBI" id="CHEBI:15377"/>
        <dbReference type="ChEBI" id="CHEBI:15378"/>
        <dbReference type="ChEBI" id="CHEBI:16845"/>
        <dbReference type="ChEBI" id="CHEBI:57540"/>
        <dbReference type="ChEBI" id="CHEBI:57945"/>
        <dbReference type="ChEBI" id="CHEBI:67139"/>
        <dbReference type="EC" id="1.17.1.8"/>
    </reaction>
</comment>
<comment type="catalytic activity">
    <reaction evidence="1">
        <text>(S)-2,3,4,5-tetrahydrodipicolinate + NADP(+) + H2O = (2S,4S)-4-hydroxy-2,3,4,5-tetrahydrodipicolinate + NADPH + H(+)</text>
        <dbReference type="Rhea" id="RHEA:35331"/>
        <dbReference type="ChEBI" id="CHEBI:15377"/>
        <dbReference type="ChEBI" id="CHEBI:15378"/>
        <dbReference type="ChEBI" id="CHEBI:16845"/>
        <dbReference type="ChEBI" id="CHEBI:57783"/>
        <dbReference type="ChEBI" id="CHEBI:58349"/>
        <dbReference type="ChEBI" id="CHEBI:67139"/>
        <dbReference type="EC" id="1.17.1.8"/>
    </reaction>
</comment>
<comment type="pathway">
    <text evidence="1">Amino-acid biosynthesis; L-lysine biosynthesis via DAP pathway; (S)-tetrahydrodipicolinate from L-aspartate: step 4/4.</text>
</comment>
<comment type="subcellular location">
    <subcellularLocation>
        <location evidence="1">Cytoplasm</location>
    </subcellularLocation>
</comment>
<comment type="similarity">
    <text evidence="1">Belongs to the DapB family.</text>
</comment>
<comment type="caution">
    <text evidence="2">Was originally thought to be a dihydrodipicolinate reductase (DHDPR), catalyzing the conversion of dihydrodipicolinate to tetrahydrodipicolinate. However, it was shown in E.coli that the substrate of the enzymatic reaction is not dihydrodipicolinate (DHDP) but in fact (2S,4S)-4-hydroxy-2,3,4,5-tetrahydrodipicolinic acid (HTPA), the product released by the DapA-catalyzed reaction.</text>
</comment>
<organism>
    <name type="scientific">Clostridium botulinum (strain Eklund 17B / Type B)</name>
    <dbReference type="NCBI Taxonomy" id="935198"/>
    <lineage>
        <taxon>Bacteria</taxon>
        <taxon>Bacillati</taxon>
        <taxon>Bacillota</taxon>
        <taxon>Clostridia</taxon>
        <taxon>Eubacteriales</taxon>
        <taxon>Clostridiaceae</taxon>
        <taxon>Clostridium</taxon>
    </lineage>
</organism>
<feature type="chain" id="PRO_1000093959" description="4-hydroxy-tetrahydrodipicolinate reductase">
    <location>
        <begin position="1"/>
        <end position="252"/>
    </location>
</feature>
<feature type="active site" description="Proton donor/acceptor" evidence="1">
    <location>
        <position position="141"/>
    </location>
</feature>
<feature type="active site" description="Proton donor" evidence="1">
    <location>
        <position position="145"/>
    </location>
</feature>
<feature type="binding site" evidence="1">
    <location>
        <begin position="8"/>
        <end position="13"/>
    </location>
    <ligand>
        <name>NAD(+)</name>
        <dbReference type="ChEBI" id="CHEBI:57540"/>
    </ligand>
</feature>
<feature type="binding site" evidence="1">
    <location>
        <begin position="84"/>
        <end position="86"/>
    </location>
    <ligand>
        <name>NAD(+)</name>
        <dbReference type="ChEBI" id="CHEBI:57540"/>
    </ligand>
</feature>
<feature type="binding site" evidence="1">
    <location>
        <begin position="108"/>
        <end position="111"/>
    </location>
    <ligand>
        <name>NAD(+)</name>
        <dbReference type="ChEBI" id="CHEBI:57540"/>
    </ligand>
</feature>
<feature type="binding site" evidence="1">
    <location>
        <position position="142"/>
    </location>
    <ligand>
        <name>(S)-2,3,4,5-tetrahydrodipicolinate</name>
        <dbReference type="ChEBI" id="CHEBI:16845"/>
    </ligand>
</feature>
<feature type="binding site" evidence="1">
    <location>
        <begin position="151"/>
        <end position="152"/>
    </location>
    <ligand>
        <name>(S)-2,3,4,5-tetrahydrodipicolinate</name>
        <dbReference type="ChEBI" id="CHEBI:16845"/>
    </ligand>
</feature>
<name>DAPB_CLOBB</name>
<protein>
    <recommendedName>
        <fullName evidence="1">4-hydroxy-tetrahydrodipicolinate reductase</fullName>
        <shortName evidence="1">HTPA reductase</shortName>
        <ecNumber evidence="1">1.17.1.8</ecNumber>
    </recommendedName>
</protein>
<sequence>MIKIVLNGCCGKMGKVITECASKFNDLQIVAGIDKFPYETSYPIFETPEDLNLDYDVLLDFSRAGALKGLLNLTEKTKKPLVICSTGFSDEDLALIEEKSKTLPLFRSANMSLGINLINSLLRKVTPLLYGNYDIEIIEKHHNQKVDSPSGTAVLLADTIKESINDETKFVYGRSGASKREENEIGIHAIRGGSIVGDHDVIFAGVGEVIELSHKAISREVFAIGALKACEYMGNISIPGLYTMDDVIGITK</sequence>
<accession>B2TS69</accession>
<keyword id="KW-0028">Amino-acid biosynthesis</keyword>
<keyword id="KW-0963">Cytoplasm</keyword>
<keyword id="KW-0220">Diaminopimelate biosynthesis</keyword>
<keyword id="KW-0457">Lysine biosynthesis</keyword>
<keyword id="KW-0520">NAD</keyword>
<keyword id="KW-0521">NADP</keyword>
<keyword id="KW-0560">Oxidoreductase</keyword>
<proteinExistence type="inferred from homology"/>
<dbReference type="EC" id="1.17.1.8" evidence="1"/>
<dbReference type="EMBL" id="CP001056">
    <property type="protein sequence ID" value="ACD23728.1"/>
    <property type="molecule type" value="Genomic_DNA"/>
</dbReference>
<dbReference type="SMR" id="B2TS69"/>
<dbReference type="KEGG" id="cbk:CLL_A2487"/>
<dbReference type="PATRIC" id="fig|935198.13.peg.2447"/>
<dbReference type="HOGENOM" id="CLU_047479_2_2_9"/>
<dbReference type="UniPathway" id="UPA00034">
    <property type="reaction ID" value="UER00018"/>
</dbReference>
<dbReference type="Proteomes" id="UP000001195">
    <property type="component" value="Chromosome"/>
</dbReference>
<dbReference type="GO" id="GO:0005829">
    <property type="term" value="C:cytosol"/>
    <property type="evidence" value="ECO:0007669"/>
    <property type="project" value="TreeGrafter"/>
</dbReference>
<dbReference type="GO" id="GO:0008839">
    <property type="term" value="F:4-hydroxy-tetrahydrodipicolinate reductase"/>
    <property type="evidence" value="ECO:0007669"/>
    <property type="project" value="UniProtKB-EC"/>
</dbReference>
<dbReference type="GO" id="GO:0051287">
    <property type="term" value="F:NAD binding"/>
    <property type="evidence" value="ECO:0007669"/>
    <property type="project" value="UniProtKB-UniRule"/>
</dbReference>
<dbReference type="GO" id="GO:0050661">
    <property type="term" value="F:NADP binding"/>
    <property type="evidence" value="ECO:0007669"/>
    <property type="project" value="UniProtKB-UniRule"/>
</dbReference>
<dbReference type="GO" id="GO:0016726">
    <property type="term" value="F:oxidoreductase activity, acting on CH or CH2 groups, NAD or NADP as acceptor"/>
    <property type="evidence" value="ECO:0007669"/>
    <property type="project" value="UniProtKB-UniRule"/>
</dbReference>
<dbReference type="GO" id="GO:0019877">
    <property type="term" value="P:diaminopimelate biosynthetic process"/>
    <property type="evidence" value="ECO:0007669"/>
    <property type="project" value="UniProtKB-UniRule"/>
</dbReference>
<dbReference type="GO" id="GO:0009089">
    <property type="term" value="P:lysine biosynthetic process via diaminopimelate"/>
    <property type="evidence" value="ECO:0007669"/>
    <property type="project" value="UniProtKB-UniRule"/>
</dbReference>
<dbReference type="CDD" id="cd02274">
    <property type="entry name" value="DHDPR_N"/>
    <property type="match status" value="1"/>
</dbReference>
<dbReference type="FunFam" id="3.30.360.10:FF:000009">
    <property type="entry name" value="4-hydroxy-tetrahydrodipicolinate reductase"/>
    <property type="match status" value="1"/>
</dbReference>
<dbReference type="Gene3D" id="3.30.360.10">
    <property type="entry name" value="Dihydrodipicolinate Reductase, domain 2"/>
    <property type="match status" value="1"/>
</dbReference>
<dbReference type="Gene3D" id="3.40.50.720">
    <property type="entry name" value="NAD(P)-binding Rossmann-like Domain"/>
    <property type="match status" value="1"/>
</dbReference>
<dbReference type="HAMAP" id="MF_00102">
    <property type="entry name" value="DapB"/>
    <property type="match status" value="1"/>
</dbReference>
<dbReference type="InterPro" id="IPR022663">
    <property type="entry name" value="DapB_C"/>
</dbReference>
<dbReference type="InterPro" id="IPR000846">
    <property type="entry name" value="DapB_N"/>
</dbReference>
<dbReference type="InterPro" id="IPR022664">
    <property type="entry name" value="DapB_N_CS"/>
</dbReference>
<dbReference type="InterPro" id="IPR023940">
    <property type="entry name" value="DHDPR_bac"/>
</dbReference>
<dbReference type="InterPro" id="IPR036291">
    <property type="entry name" value="NAD(P)-bd_dom_sf"/>
</dbReference>
<dbReference type="NCBIfam" id="TIGR00036">
    <property type="entry name" value="dapB"/>
    <property type="match status" value="1"/>
</dbReference>
<dbReference type="PANTHER" id="PTHR20836:SF7">
    <property type="entry name" value="4-HYDROXY-TETRAHYDRODIPICOLINATE REDUCTASE"/>
    <property type="match status" value="1"/>
</dbReference>
<dbReference type="PANTHER" id="PTHR20836">
    <property type="entry name" value="DIHYDRODIPICOLINATE REDUCTASE"/>
    <property type="match status" value="1"/>
</dbReference>
<dbReference type="Pfam" id="PF05173">
    <property type="entry name" value="DapB_C"/>
    <property type="match status" value="1"/>
</dbReference>
<dbReference type="Pfam" id="PF01113">
    <property type="entry name" value="DapB_N"/>
    <property type="match status" value="1"/>
</dbReference>
<dbReference type="PIRSF" id="PIRSF000161">
    <property type="entry name" value="DHPR"/>
    <property type="match status" value="1"/>
</dbReference>
<dbReference type="SUPFAM" id="SSF55347">
    <property type="entry name" value="Glyceraldehyde-3-phosphate dehydrogenase-like, C-terminal domain"/>
    <property type="match status" value="1"/>
</dbReference>
<dbReference type="SUPFAM" id="SSF51735">
    <property type="entry name" value="NAD(P)-binding Rossmann-fold domains"/>
    <property type="match status" value="1"/>
</dbReference>
<dbReference type="PROSITE" id="PS01298">
    <property type="entry name" value="DAPB"/>
    <property type="match status" value="1"/>
</dbReference>
<gene>
    <name evidence="1" type="primary">dapB</name>
    <name type="ordered locus">CLL_A2487</name>
</gene>
<reference key="1">
    <citation type="submission" date="2008-04" db="EMBL/GenBank/DDBJ databases">
        <title>Complete sequence of Clostridium botulinum strain Eklund.</title>
        <authorList>
            <person name="Brinkac L.M."/>
            <person name="Brown J.L."/>
            <person name="Bruce D."/>
            <person name="Detter C."/>
            <person name="Munk C."/>
            <person name="Smith L.A."/>
            <person name="Smith T.J."/>
            <person name="Sutton G."/>
            <person name="Brettin T.S."/>
        </authorList>
    </citation>
    <scope>NUCLEOTIDE SEQUENCE [LARGE SCALE GENOMIC DNA]</scope>
    <source>
        <strain>Eklund 17B / Type B</strain>
    </source>
</reference>
<evidence type="ECO:0000255" key="1">
    <source>
        <dbReference type="HAMAP-Rule" id="MF_00102"/>
    </source>
</evidence>
<evidence type="ECO:0000305" key="2"/>